<evidence type="ECO:0000255" key="1">
    <source>
        <dbReference type="HAMAP-Rule" id="MF_01253"/>
    </source>
</evidence>
<keyword id="KW-0227">DNA damage</keyword>
<keyword id="KW-0234">DNA repair</keyword>
<keyword id="KW-0238">DNA-binding</keyword>
<keyword id="KW-0326">Glycosidase</keyword>
<keyword id="KW-0378">Hydrolase</keyword>
<keyword id="KW-0456">Lyase</keyword>
<keyword id="KW-0479">Metal-binding</keyword>
<keyword id="KW-0511">Multifunctional enzyme</keyword>
<keyword id="KW-0862">Zinc</keyword>
<keyword id="KW-0863">Zinc-finger</keyword>
<proteinExistence type="inferred from homology"/>
<accession>B7M5M8</accession>
<protein>
    <recommendedName>
        <fullName evidence="1">Endonuclease 8</fullName>
    </recommendedName>
    <alternativeName>
        <fullName evidence="1">DNA glycosylase/AP lyase Nei</fullName>
        <ecNumber evidence="1">3.2.2.-</ecNumber>
        <ecNumber evidence="1">4.2.99.18</ecNumber>
    </alternativeName>
    <alternativeName>
        <fullName evidence="1">DNA-(apurinic or apyrimidinic site) lyase Nei</fullName>
    </alternativeName>
    <alternativeName>
        <fullName evidence="1">Endonuclease VIII</fullName>
    </alternativeName>
</protein>
<organism>
    <name type="scientific">Escherichia coli O8 (strain IAI1)</name>
    <dbReference type="NCBI Taxonomy" id="585034"/>
    <lineage>
        <taxon>Bacteria</taxon>
        <taxon>Pseudomonadati</taxon>
        <taxon>Pseudomonadota</taxon>
        <taxon>Gammaproteobacteria</taxon>
        <taxon>Enterobacterales</taxon>
        <taxon>Enterobacteriaceae</taxon>
        <taxon>Escherichia</taxon>
    </lineage>
</organism>
<reference key="1">
    <citation type="journal article" date="2009" name="PLoS Genet.">
        <title>Organised genome dynamics in the Escherichia coli species results in highly diverse adaptive paths.</title>
        <authorList>
            <person name="Touchon M."/>
            <person name="Hoede C."/>
            <person name="Tenaillon O."/>
            <person name="Barbe V."/>
            <person name="Baeriswyl S."/>
            <person name="Bidet P."/>
            <person name="Bingen E."/>
            <person name="Bonacorsi S."/>
            <person name="Bouchier C."/>
            <person name="Bouvet O."/>
            <person name="Calteau A."/>
            <person name="Chiapello H."/>
            <person name="Clermont O."/>
            <person name="Cruveiller S."/>
            <person name="Danchin A."/>
            <person name="Diard M."/>
            <person name="Dossat C."/>
            <person name="Karoui M.E."/>
            <person name="Frapy E."/>
            <person name="Garry L."/>
            <person name="Ghigo J.M."/>
            <person name="Gilles A.M."/>
            <person name="Johnson J."/>
            <person name="Le Bouguenec C."/>
            <person name="Lescat M."/>
            <person name="Mangenot S."/>
            <person name="Martinez-Jehanne V."/>
            <person name="Matic I."/>
            <person name="Nassif X."/>
            <person name="Oztas S."/>
            <person name="Petit M.A."/>
            <person name="Pichon C."/>
            <person name="Rouy Z."/>
            <person name="Ruf C.S."/>
            <person name="Schneider D."/>
            <person name="Tourret J."/>
            <person name="Vacherie B."/>
            <person name="Vallenet D."/>
            <person name="Medigue C."/>
            <person name="Rocha E.P.C."/>
            <person name="Denamur E."/>
        </authorList>
    </citation>
    <scope>NUCLEOTIDE SEQUENCE [LARGE SCALE GENOMIC DNA]</scope>
    <source>
        <strain>IAI1</strain>
    </source>
</reference>
<feature type="initiator methionine" description="Removed" evidence="1">
    <location>
        <position position="1"/>
    </location>
</feature>
<feature type="chain" id="PRO_1000139933" description="Endonuclease 8">
    <location>
        <begin position="2"/>
        <end position="263"/>
    </location>
</feature>
<feature type="zinc finger region" description="FPG-type" evidence="1">
    <location>
        <begin position="229"/>
        <end position="263"/>
    </location>
</feature>
<feature type="active site" description="Schiff-base intermediate with DNA" evidence="1">
    <location>
        <position position="2"/>
    </location>
</feature>
<feature type="active site" description="Proton donor" evidence="1">
    <location>
        <position position="3"/>
    </location>
</feature>
<feature type="active site" description="Proton donor; for beta-elimination activity" evidence="1">
    <location>
        <position position="53"/>
    </location>
</feature>
<feature type="active site" description="Proton donor; for delta-elimination activity" evidence="1">
    <location>
        <position position="253"/>
    </location>
</feature>
<feature type="binding site" evidence="1">
    <location>
        <position position="70"/>
    </location>
    <ligand>
        <name>DNA</name>
        <dbReference type="ChEBI" id="CHEBI:16991"/>
    </ligand>
</feature>
<feature type="binding site" evidence="1">
    <location>
        <position position="125"/>
    </location>
    <ligand>
        <name>DNA</name>
        <dbReference type="ChEBI" id="CHEBI:16991"/>
    </ligand>
</feature>
<feature type="binding site" evidence="1">
    <location>
        <position position="169"/>
    </location>
    <ligand>
        <name>DNA</name>
        <dbReference type="ChEBI" id="CHEBI:16991"/>
    </ligand>
</feature>
<gene>
    <name evidence="1" type="primary">nei</name>
    <name type="ordered locus">ECIAI1_0688</name>
</gene>
<sequence>MPEGPEIRRAADNLEAAIKGKPLTDVWFAFPQLKTYQSQLIGQHVTHVETRGKALLTHFSNDLTLYSHNQLYGVWRVVDTSEEPQTTRVLRVKLQTADKTILLYSASDIEMLRPEQLTTHPFLQRVGPDVLDPNLTPEVVKERLLSPRFRNRQFAGLLLDQAFLAGLGNYLRVEILWQVGLTGNHKAKDLNAAQLDALAHALLEIPRFSYATRGQVDENKHHGALFRFKVFHRDGELCERCGGIIEKTTLSSRPFYWCPGCQH</sequence>
<comment type="function">
    <text evidence="1">Involved in base excision repair of DNA damaged by oxidation or by mutagenic agents. Acts as a DNA glycosylase that recognizes and removes damaged bases. Has a preference for oxidized pyrimidines, such as thymine glycol, 5,6-dihydrouracil and 5,6-dihydrothymine. Has AP (apurinic/apyrimidinic) lyase activity and introduces nicks in the DNA strand. Cleaves the DNA backbone by beta-delta elimination to generate a single-strand break at the site of the removed base with both 3'- and 5'-phosphates.</text>
</comment>
<comment type="catalytic activity">
    <reaction evidence="1">
        <text>2'-deoxyribonucleotide-(2'-deoxyribose 5'-phosphate)-2'-deoxyribonucleotide-DNA = a 3'-end 2'-deoxyribonucleotide-(2,3-dehydro-2,3-deoxyribose 5'-phosphate)-DNA + a 5'-end 5'-phospho-2'-deoxyribonucleoside-DNA + H(+)</text>
        <dbReference type="Rhea" id="RHEA:66592"/>
        <dbReference type="Rhea" id="RHEA-COMP:13180"/>
        <dbReference type="Rhea" id="RHEA-COMP:16897"/>
        <dbReference type="Rhea" id="RHEA-COMP:17067"/>
        <dbReference type="ChEBI" id="CHEBI:15378"/>
        <dbReference type="ChEBI" id="CHEBI:136412"/>
        <dbReference type="ChEBI" id="CHEBI:157695"/>
        <dbReference type="ChEBI" id="CHEBI:167181"/>
        <dbReference type="EC" id="4.2.99.18"/>
    </reaction>
</comment>
<comment type="cofactor">
    <cofactor evidence="1">
        <name>Zn(2+)</name>
        <dbReference type="ChEBI" id="CHEBI:29105"/>
    </cofactor>
    <text evidence="1">Binds 1 zinc ion per subunit.</text>
</comment>
<comment type="similarity">
    <text evidence="1">Belongs to the FPG family.</text>
</comment>
<dbReference type="EC" id="3.2.2.-" evidence="1"/>
<dbReference type="EC" id="4.2.99.18" evidence="1"/>
<dbReference type="EMBL" id="CU928160">
    <property type="protein sequence ID" value="CAQ97556.1"/>
    <property type="molecule type" value="Genomic_DNA"/>
</dbReference>
<dbReference type="RefSeq" id="WP_001114035.1">
    <property type="nucleotide sequence ID" value="NC_011741.1"/>
</dbReference>
<dbReference type="SMR" id="B7M5M8"/>
<dbReference type="KEGG" id="ecr:ECIAI1_0688"/>
<dbReference type="HOGENOM" id="CLU_038423_2_2_6"/>
<dbReference type="GO" id="GO:0140078">
    <property type="term" value="F:class I DNA-(apurinic or apyrimidinic site) endonuclease activity"/>
    <property type="evidence" value="ECO:0007669"/>
    <property type="project" value="UniProtKB-EC"/>
</dbReference>
<dbReference type="GO" id="GO:0003684">
    <property type="term" value="F:damaged DNA binding"/>
    <property type="evidence" value="ECO:0007669"/>
    <property type="project" value="InterPro"/>
</dbReference>
<dbReference type="GO" id="GO:0000703">
    <property type="term" value="F:oxidized pyrimidine nucleobase lesion DNA N-glycosylase activity"/>
    <property type="evidence" value="ECO:0007669"/>
    <property type="project" value="UniProtKB-UniRule"/>
</dbReference>
<dbReference type="GO" id="GO:0008270">
    <property type="term" value="F:zinc ion binding"/>
    <property type="evidence" value="ECO:0007669"/>
    <property type="project" value="UniProtKB-UniRule"/>
</dbReference>
<dbReference type="GO" id="GO:0006284">
    <property type="term" value="P:base-excision repair"/>
    <property type="evidence" value="ECO:0007669"/>
    <property type="project" value="InterPro"/>
</dbReference>
<dbReference type="CDD" id="cd08965">
    <property type="entry name" value="EcNei-like_N"/>
    <property type="match status" value="1"/>
</dbReference>
<dbReference type="FunFam" id="1.10.8.50:FF:000005">
    <property type="entry name" value="Endonuclease 8"/>
    <property type="match status" value="1"/>
</dbReference>
<dbReference type="FunFam" id="3.20.190.10:FF:000002">
    <property type="entry name" value="Endonuclease 8"/>
    <property type="match status" value="1"/>
</dbReference>
<dbReference type="Gene3D" id="1.10.8.50">
    <property type="match status" value="1"/>
</dbReference>
<dbReference type="Gene3D" id="3.20.190.10">
    <property type="entry name" value="MutM-like, N-terminal"/>
    <property type="match status" value="1"/>
</dbReference>
<dbReference type="HAMAP" id="MF_01253">
    <property type="entry name" value="Endonuclease_8"/>
    <property type="match status" value="1"/>
</dbReference>
<dbReference type="InterPro" id="IPR015886">
    <property type="entry name" value="DNA_glyclase/AP_lyase_DNA-bd"/>
</dbReference>
<dbReference type="InterPro" id="IPR015887">
    <property type="entry name" value="DNA_glyclase_Znf_dom_DNA_BS"/>
</dbReference>
<dbReference type="InterPro" id="IPR044091">
    <property type="entry name" value="EcNei-like_N"/>
</dbReference>
<dbReference type="InterPro" id="IPR023713">
    <property type="entry name" value="Endonuclease-VIII"/>
</dbReference>
<dbReference type="InterPro" id="IPR012319">
    <property type="entry name" value="FPG_cat"/>
</dbReference>
<dbReference type="InterPro" id="IPR035937">
    <property type="entry name" value="MutM-like_N-ter"/>
</dbReference>
<dbReference type="InterPro" id="IPR010979">
    <property type="entry name" value="Ribosomal_uS13-like_H2TH"/>
</dbReference>
<dbReference type="InterPro" id="IPR000214">
    <property type="entry name" value="Znf_DNA_glyclase/AP_lyase"/>
</dbReference>
<dbReference type="InterPro" id="IPR010663">
    <property type="entry name" value="Znf_FPG/IleRS"/>
</dbReference>
<dbReference type="NCBIfam" id="NF007763">
    <property type="entry name" value="PRK10445.1"/>
    <property type="match status" value="1"/>
</dbReference>
<dbReference type="PANTHER" id="PTHR42697">
    <property type="entry name" value="ENDONUCLEASE 8"/>
    <property type="match status" value="1"/>
</dbReference>
<dbReference type="PANTHER" id="PTHR42697:SF1">
    <property type="entry name" value="ENDONUCLEASE 8"/>
    <property type="match status" value="1"/>
</dbReference>
<dbReference type="Pfam" id="PF01149">
    <property type="entry name" value="Fapy_DNA_glyco"/>
    <property type="match status" value="1"/>
</dbReference>
<dbReference type="Pfam" id="PF06831">
    <property type="entry name" value="H2TH"/>
    <property type="match status" value="1"/>
</dbReference>
<dbReference type="Pfam" id="PF06827">
    <property type="entry name" value="zf-FPG_IleRS"/>
    <property type="match status" value="1"/>
</dbReference>
<dbReference type="SMART" id="SM00898">
    <property type="entry name" value="Fapy_DNA_glyco"/>
    <property type="match status" value="1"/>
</dbReference>
<dbReference type="SMART" id="SM01232">
    <property type="entry name" value="H2TH"/>
    <property type="match status" value="1"/>
</dbReference>
<dbReference type="SUPFAM" id="SSF57716">
    <property type="entry name" value="Glucocorticoid receptor-like (DNA-binding domain)"/>
    <property type="match status" value="1"/>
</dbReference>
<dbReference type="SUPFAM" id="SSF81624">
    <property type="entry name" value="N-terminal domain of MutM-like DNA repair proteins"/>
    <property type="match status" value="1"/>
</dbReference>
<dbReference type="SUPFAM" id="SSF46946">
    <property type="entry name" value="S13-like H2TH domain"/>
    <property type="match status" value="1"/>
</dbReference>
<dbReference type="PROSITE" id="PS51068">
    <property type="entry name" value="FPG_CAT"/>
    <property type="match status" value="1"/>
</dbReference>
<dbReference type="PROSITE" id="PS01242">
    <property type="entry name" value="ZF_FPG_1"/>
    <property type="match status" value="1"/>
</dbReference>
<dbReference type="PROSITE" id="PS51066">
    <property type="entry name" value="ZF_FPG_2"/>
    <property type="match status" value="1"/>
</dbReference>
<name>END8_ECO8A</name>